<evidence type="ECO:0000255" key="1">
    <source>
        <dbReference type="HAMAP-Rule" id="MF_00360"/>
    </source>
</evidence>
<evidence type="ECO:0000256" key="2">
    <source>
        <dbReference type="SAM" id="MobiDB-lite"/>
    </source>
</evidence>
<evidence type="ECO:0000305" key="3"/>
<comment type="function">
    <text evidence="1">Binds together with bS18 to 16S ribosomal RNA.</text>
</comment>
<comment type="similarity">
    <text evidence="1">Belongs to the bacterial ribosomal protein bS6 family.</text>
</comment>
<proteinExistence type="inferred from homology"/>
<reference key="1">
    <citation type="submission" date="2007-02" db="EMBL/GenBank/DDBJ databases">
        <title>Complete sequence of chromosome of Shewanella baltica OS155.</title>
        <authorList>
            <consortium name="US DOE Joint Genome Institute"/>
            <person name="Copeland A."/>
            <person name="Lucas S."/>
            <person name="Lapidus A."/>
            <person name="Barry K."/>
            <person name="Detter J.C."/>
            <person name="Glavina del Rio T."/>
            <person name="Hammon N."/>
            <person name="Israni S."/>
            <person name="Dalin E."/>
            <person name="Tice H."/>
            <person name="Pitluck S."/>
            <person name="Sims D.R."/>
            <person name="Brettin T."/>
            <person name="Bruce D."/>
            <person name="Han C."/>
            <person name="Tapia R."/>
            <person name="Brainard J."/>
            <person name="Schmutz J."/>
            <person name="Larimer F."/>
            <person name="Land M."/>
            <person name="Hauser L."/>
            <person name="Kyrpides N."/>
            <person name="Mikhailova N."/>
            <person name="Brettar I."/>
            <person name="Klappenbach J."/>
            <person name="Konstantinidis K."/>
            <person name="Rodrigues J."/>
            <person name="Tiedje J."/>
            <person name="Richardson P."/>
        </authorList>
    </citation>
    <scope>NUCLEOTIDE SEQUENCE [LARGE SCALE GENOMIC DNA]</scope>
    <source>
        <strain>OS155 / ATCC BAA-1091</strain>
    </source>
</reference>
<accession>A3D8Q5</accession>
<organism>
    <name type="scientific">Shewanella baltica (strain OS155 / ATCC BAA-1091)</name>
    <dbReference type="NCBI Taxonomy" id="325240"/>
    <lineage>
        <taxon>Bacteria</taxon>
        <taxon>Pseudomonadati</taxon>
        <taxon>Pseudomonadota</taxon>
        <taxon>Gammaproteobacteria</taxon>
        <taxon>Alteromonadales</taxon>
        <taxon>Shewanellaceae</taxon>
        <taxon>Shewanella</taxon>
    </lineage>
</organism>
<feature type="chain" id="PRO_1000005344" description="Small ribosomal subunit protein bS6">
    <location>
        <begin position="1"/>
        <end position="131"/>
    </location>
</feature>
<feature type="region of interest" description="Disordered" evidence="2">
    <location>
        <begin position="97"/>
        <end position="131"/>
    </location>
</feature>
<feature type="compositionally biased region" description="Basic and acidic residues" evidence="2">
    <location>
        <begin position="104"/>
        <end position="131"/>
    </location>
</feature>
<sequence length="131" mass="15113">MRHYEIVFMVHPDQSEQVPGMIERYTGVITEANGTIHRLEDWGRRQLAYPILDLHKAHYVLMNVEAKAETIEELETAFRFNDAVLRNMVMRTKVAVTEASPMAKARDERDSRRGPAGERSYDEAHAEEIAE</sequence>
<name>RS6_SHEB5</name>
<protein>
    <recommendedName>
        <fullName evidence="1">Small ribosomal subunit protein bS6</fullName>
    </recommendedName>
    <alternativeName>
        <fullName evidence="3">30S ribosomal protein S6</fullName>
    </alternativeName>
</protein>
<gene>
    <name evidence="1" type="primary">rpsF</name>
    <name type="ordered locus">Sbal_3643</name>
</gene>
<keyword id="KW-1185">Reference proteome</keyword>
<keyword id="KW-0687">Ribonucleoprotein</keyword>
<keyword id="KW-0689">Ribosomal protein</keyword>
<keyword id="KW-0694">RNA-binding</keyword>
<keyword id="KW-0699">rRNA-binding</keyword>
<dbReference type="EMBL" id="CP000563">
    <property type="protein sequence ID" value="ABN63118.1"/>
    <property type="molecule type" value="Genomic_DNA"/>
</dbReference>
<dbReference type="RefSeq" id="WP_006083044.1">
    <property type="nucleotide sequence ID" value="NC_009052.1"/>
</dbReference>
<dbReference type="SMR" id="A3D8Q5"/>
<dbReference type="STRING" id="325240.Sbal_3643"/>
<dbReference type="GeneID" id="11771052"/>
<dbReference type="KEGG" id="sbl:Sbal_3643"/>
<dbReference type="HOGENOM" id="CLU_113441_6_1_6"/>
<dbReference type="OrthoDB" id="9812702at2"/>
<dbReference type="Proteomes" id="UP000001557">
    <property type="component" value="Chromosome"/>
</dbReference>
<dbReference type="GO" id="GO:0022627">
    <property type="term" value="C:cytosolic small ribosomal subunit"/>
    <property type="evidence" value="ECO:0007669"/>
    <property type="project" value="TreeGrafter"/>
</dbReference>
<dbReference type="GO" id="GO:0070181">
    <property type="term" value="F:small ribosomal subunit rRNA binding"/>
    <property type="evidence" value="ECO:0007669"/>
    <property type="project" value="TreeGrafter"/>
</dbReference>
<dbReference type="GO" id="GO:0003735">
    <property type="term" value="F:structural constituent of ribosome"/>
    <property type="evidence" value="ECO:0007669"/>
    <property type="project" value="InterPro"/>
</dbReference>
<dbReference type="GO" id="GO:0006412">
    <property type="term" value="P:translation"/>
    <property type="evidence" value="ECO:0007669"/>
    <property type="project" value="UniProtKB-UniRule"/>
</dbReference>
<dbReference type="CDD" id="cd00473">
    <property type="entry name" value="bS6"/>
    <property type="match status" value="1"/>
</dbReference>
<dbReference type="FunFam" id="3.30.70.60:FF:000003">
    <property type="entry name" value="30S ribosomal protein S6"/>
    <property type="match status" value="1"/>
</dbReference>
<dbReference type="Gene3D" id="3.30.70.60">
    <property type="match status" value="1"/>
</dbReference>
<dbReference type="HAMAP" id="MF_00360">
    <property type="entry name" value="Ribosomal_bS6"/>
    <property type="match status" value="1"/>
</dbReference>
<dbReference type="InterPro" id="IPR000529">
    <property type="entry name" value="Ribosomal_bS6"/>
</dbReference>
<dbReference type="InterPro" id="IPR035980">
    <property type="entry name" value="Ribosomal_bS6_sf"/>
</dbReference>
<dbReference type="InterPro" id="IPR020814">
    <property type="entry name" value="Ribosomal_S6_plastid/chlpt"/>
</dbReference>
<dbReference type="InterPro" id="IPR014717">
    <property type="entry name" value="Transl_elong_EF1B/ribsomal_bS6"/>
</dbReference>
<dbReference type="NCBIfam" id="TIGR00166">
    <property type="entry name" value="S6"/>
    <property type="match status" value="1"/>
</dbReference>
<dbReference type="PANTHER" id="PTHR21011">
    <property type="entry name" value="MITOCHONDRIAL 28S RIBOSOMAL PROTEIN S6"/>
    <property type="match status" value="1"/>
</dbReference>
<dbReference type="PANTHER" id="PTHR21011:SF1">
    <property type="entry name" value="SMALL RIBOSOMAL SUBUNIT PROTEIN BS6M"/>
    <property type="match status" value="1"/>
</dbReference>
<dbReference type="Pfam" id="PF01250">
    <property type="entry name" value="Ribosomal_S6"/>
    <property type="match status" value="1"/>
</dbReference>
<dbReference type="SUPFAM" id="SSF54995">
    <property type="entry name" value="Ribosomal protein S6"/>
    <property type="match status" value="1"/>
</dbReference>